<sequence length="183" mass="20612">MTCYTPRLLTRYREEIVPVLMSRFDINNVHQVPSITKIVVNSGVGDAARDSKIIEGAVSDITLITGQKPRINRAKQSIAKFKLREGQAVGVTATLRGRRMWEFLDRLLTLALPRIRDFRGISDKQFDGHGNYTFGLSEQGIFHEIDQDKIDRVRGMDITVVTTSSSDDMARALLGELGFPFKK</sequence>
<organism>
    <name type="scientific">Tropheryma whipplei (strain TW08/27)</name>
    <name type="common">Whipple's bacillus</name>
    <dbReference type="NCBI Taxonomy" id="218496"/>
    <lineage>
        <taxon>Bacteria</taxon>
        <taxon>Bacillati</taxon>
        <taxon>Actinomycetota</taxon>
        <taxon>Actinomycetes</taxon>
        <taxon>Micrococcales</taxon>
        <taxon>Tropherymataceae</taxon>
        <taxon>Tropheryma</taxon>
    </lineage>
</organism>
<name>RL5_TROW8</name>
<dbReference type="EMBL" id="BX251410">
    <property type="protein sequence ID" value="CAD66896.1"/>
    <property type="molecule type" value="Genomic_DNA"/>
</dbReference>
<dbReference type="RefSeq" id="WP_011096177.1">
    <property type="nucleotide sequence ID" value="NC_004551.1"/>
</dbReference>
<dbReference type="SMR" id="Q83I66"/>
<dbReference type="GeneID" id="67387995"/>
<dbReference type="KEGG" id="tws:TW219"/>
<dbReference type="HOGENOM" id="CLU_061015_2_1_11"/>
<dbReference type="GO" id="GO:1990904">
    <property type="term" value="C:ribonucleoprotein complex"/>
    <property type="evidence" value="ECO:0007669"/>
    <property type="project" value="UniProtKB-KW"/>
</dbReference>
<dbReference type="GO" id="GO:0005840">
    <property type="term" value="C:ribosome"/>
    <property type="evidence" value="ECO:0007669"/>
    <property type="project" value="UniProtKB-KW"/>
</dbReference>
<dbReference type="GO" id="GO:0019843">
    <property type="term" value="F:rRNA binding"/>
    <property type="evidence" value="ECO:0007669"/>
    <property type="project" value="UniProtKB-UniRule"/>
</dbReference>
<dbReference type="GO" id="GO:0003735">
    <property type="term" value="F:structural constituent of ribosome"/>
    <property type="evidence" value="ECO:0007669"/>
    <property type="project" value="InterPro"/>
</dbReference>
<dbReference type="GO" id="GO:0000049">
    <property type="term" value="F:tRNA binding"/>
    <property type="evidence" value="ECO:0007669"/>
    <property type="project" value="UniProtKB-UniRule"/>
</dbReference>
<dbReference type="GO" id="GO:0006412">
    <property type="term" value="P:translation"/>
    <property type="evidence" value="ECO:0007669"/>
    <property type="project" value="UniProtKB-UniRule"/>
</dbReference>
<dbReference type="FunFam" id="3.30.1440.10:FF:000001">
    <property type="entry name" value="50S ribosomal protein L5"/>
    <property type="match status" value="1"/>
</dbReference>
<dbReference type="Gene3D" id="3.30.1440.10">
    <property type="match status" value="1"/>
</dbReference>
<dbReference type="HAMAP" id="MF_01333_B">
    <property type="entry name" value="Ribosomal_uL5_B"/>
    <property type="match status" value="1"/>
</dbReference>
<dbReference type="InterPro" id="IPR002132">
    <property type="entry name" value="Ribosomal_uL5"/>
</dbReference>
<dbReference type="InterPro" id="IPR020930">
    <property type="entry name" value="Ribosomal_uL5_bac-type"/>
</dbReference>
<dbReference type="InterPro" id="IPR031309">
    <property type="entry name" value="Ribosomal_uL5_C"/>
</dbReference>
<dbReference type="InterPro" id="IPR022803">
    <property type="entry name" value="Ribosomal_uL5_dom_sf"/>
</dbReference>
<dbReference type="InterPro" id="IPR031310">
    <property type="entry name" value="Ribosomal_uL5_N"/>
</dbReference>
<dbReference type="NCBIfam" id="NF000585">
    <property type="entry name" value="PRK00010.1"/>
    <property type="match status" value="1"/>
</dbReference>
<dbReference type="PANTHER" id="PTHR11994">
    <property type="entry name" value="60S RIBOSOMAL PROTEIN L11-RELATED"/>
    <property type="match status" value="1"/>
</dbReference>
<dbReference type="Pfam" id="PF00281">
    <property type="entry name" value="Ribosomal_L5"/>
    <property type="match status" value="1"/>
</dbReference>
<dbReference type="Pfam" id="PF00673">
    <property type="entry name" value="Ribosomal_L5_C"/>
    <property type="match status" value="1"/>
</dbReference>
<dbReference type="PIRSF" id="PIRSF002161">
    <property type="entry name" value="Ribosomal_L5"/>
    <property type="match status" value="1"/>
</dbReference>
<dbReference type="SUPFAM" id="SSF55282">
    <property type="entry name" value="RL5-like"/>
    <property type="match status" value="1"/>
</dbReference>
<reference key="1">
    <citation type="journal article" date="2003" name="Lancet">
        <title>Sequencing and analysis of the genome of the Whipple's disease bacterium Tropheryma whipplei.</title>
        <authorList>
            <person name="Bentley S.D."/>
            <person name="Maiwald M."/>
            <person name="Murphy L.D."/>
            <person name="Pallen M.J."/>
            <person name="Yeats C.A."/>
            <person name="Dover L.G."/>
            <person name="Norbertczak H.T."/>
            <person name="Besra G.S."/>
            <person name="Quail M.A."/>
            <person name="Harris D.E."/>
            <person name="von Herbay A."/>
            <person name="Goble A."/>
            <person name="Rutter S."/>
            <person name="Squares R."/>
            <person name="Squares S."/>
            <person name="Barrell B.G."/>
            <person name="Parkhill J."/>
            <person name="Relman D.A."/>
        </authorList>
    </citation>
    <scope>NUCLEOTIDE SEQUENCE [LARGE SCALE GENOMIC DNA]</scope>
    <source>
        <strain>TW08/27</strain>
    </source>
</reference>
<feature type="chain" id="PRO_0000125019" description="Large ribosomal subunit protein uL5">
    <location>
        <begin position="1"/>
        <end position="183"/>
    </location>
</feature>
<gene>
    <name evidence="1" type="primary">rplE</name>
    <name type="ordered locus">TW219</name>
</gene>
<comment type="function">
    <text evidence="1">This is one of the proteins that bind and probably mediate the attachment of the 5S RNA into the large ribosomal subunit, where it forms part of the central protuberance. In the 70S ribosome it contacts protein S13 of the 30S subunit (bridge B1b), connecting the 2 subunits; this bridge is implicated in subunit movement. Contacts the P site tRNA; the 5S rRNA and some of its associated proteins might help stabilize positioning of ribosome-bound tRNAs.</text>
</comment>
<comment type="subunit">
    <text evidence="1">Part of the 50S ribosomal subunit; part of the 5S rRNA/L5/L18/L25 subcomplex. Contacts the 5S rRNA and the P site tRNA. Forms a bridge to the 30S subunit in the 70S ribosome.</text>
</comment>
<comment type="similarity">
    <text evidence="1">Belongs to the universal ribosomal protein uL5 family.</text>
</comment>
<protein>
    <recommendedName>
        <fullName evidence="1">Large ribosomal subunit protein uL5</fullName>
    </recommendedName>
    <alternativeName>
        <fullName evidence="2">50S ribosomal protein L5</fullName>
    </alternativeName>
</protein>
<accession>Q83I66</accession>
<keyword id="KW-0687">Ribonucleoprotein</keyword>
<keyword id="KW-0689">Ribosomal protein</keyword>
<keyword id="KW-0694">RNA-binding</keyword>
<keyword id="KW-0699">rRNA-binding</keyword>
<keyword id="KW-0820">tRNA-binding</keyword>
<proteinExistence type="inferred from homology"/>
<evidence type="ECO:0000255" key="1">
    <source>
        <dbReference type="HAMAP-Rule" id="MF_01333"/>
    </source>
</evidence>
<evidence type="ECO:0000305" key="2"/>